<sequence length="164" mass="18871">MSTPARRRLMRDFKRMKEDSPPGVSASPLPDNVMIWNAMIIGPADTPYEDGTFRLLLEFDEEYPNKPPHVKFLSEMFHPNVYANGEICLDILQNRWTPTYDVASILTSIQSLFNDPNPASPANVEAATLFQDHKSQYVKRVKETVEKSWEDDMEDMADEDEDEE</sequence>
<evidence type="ECO:0000250" key="1">
    <source>
        <dbReference type="UniProtKB" id="Q5VVX9"/>
    </source>
</evidence>
<evidence type="ECO:0000255" key="2">
    <source>
        <dbReference type="PROSITE-ProRule" id="PRU00388"/>
    </source>
</evidence>
<evidence type="ECO:0000255" key="3">
    <source>
        <dbReference type="PROSITE-ProRule" id="PRU10133"/>
    </source>
</evidence>
<evidence type="ECO:0007829" key="4">
    <source>
        <dbReference type="PDB" id="7W76"/>
    </source>
</evidence>
<proteinExistence type="evidence at protein level"/>
<feature type="chain" id="PRO_0000082533" description="Ubiquitin-conjugating enzyme E2 2">
    <location>
        <begin position="1"/>
        <end position="164"/>
    </location>
</feature>
<feature type="domain" description="UBC core" evidence="2">
    <location>
        <begin position="4"/>
        <end position="150"/>
    </location>
</feature>
<feature type="active site" description="Glycyl thioester intermediate" evidence="2 3">
    <location>
        <position position="88"/>
    </location>
</feature>
<feature type="helix" evidence="4">
    <location>
        <begin position="4"/>
        <end position="18"/>
    </location>
</feature>
<feature type="strand" evidence="4">
    <location>
        <begin position="24"/>
        <end position="28"/>
    </location>
</feature>
<feature type="strand" evidence="4">
    <location>
        <begin position="35"/>
        <end position="41"/>
    </location>
</feature>
<feature type="turn" evidence="4">
    <location>
        <begin position="47"/>
        <end position="50"/>
    </location>
</feature>
<feature type="strand" evidence="4">
    <location>
        <begin position="52"/>
        <end position="58"/>
    </location>
</feature>
<feature type="turn" evidence="4">
    <location>
        <begin position="61"/>
        <end position="64"/>
    </location>
</feature>
<feature type="strand" evidence="4">
    <location>
        <begin position="69"/>
        <end position="72"/>
    </location>
</feature>
<feature type="strand" evidence="4">
    <location>
        <begin position="85"/>
        <end position="87"/>
    </location>
</feature>
<feature type="turn" evidence="4">
    <location>
        <begin position="91"/>
        <end position="94"/>
    </location>
</feature>
<feature type="helix" evidence="4">
    <location>
        <begin position="102"/>
        <end position="114"/>
    </location>
</feature>
<feature type="helix" evidence="4">
    <location>
        <begin position="124"/>
        <end position="131"/>
    </location>
</feature>
<feature type="helix" evidence="4">
    <location>
        <begin position="134"/>
        <end position="148"/>
    </location>
</feature>
<feature type="helix" evidence="4">
    <location>
        <begin position="154"/>
        <end position="156"/>
    </location>
</feature>
<comment type="function">
    <text evidence="2">Catalyzes the covalent attachment of ubiquitin to other proteins. Plays a role in transcription regulation by catalyzing the monoubiquitination of histone H2B to form H2BK123ub1. H2BK123ub1 gives a specific tag for epigenetic transcriptional activation and is also a prerequisite for H3K4me and H3K79me formation. Also involved in postreplication repair of UV-damaged DNA, in N-end rule-dependent protein degradation and in sporulation.</text>
</comment>
<comment type="catalytic activity">
    <reaction evidence="2 3">
        <text>S-ubiquitinyl-[E1 ubiquitin-activating enzyme]-L-cysteine + [E2 ubiquitin-conjugating enzyme]-L-cysteine = [E1 ubiquitin-activating enzyme]-L-cysteine + S-ubiquitinyl-[E2 ubiquitin-conjugating enzyme]-L-cysteine.</text>
        <dbReference type="EC" id="2.3.2.23"/>
    </reaction>
</comment>
<comment type="pathway">
    <text evidence="2">Protein modification; protein ubiquitination.</text>
</comment>
<comment type="subcellular location">
    <subcellularLocation>
        <location evidence="1">Cytoplasm</location>
    </subcellularLocation>
    <subcellularLocation>
        <location evidence="1">Nucleus</location>
    </subcellularLocation>
</comment>
<comment type="similarity">
    <text evidence="2">Belongs to the ubiquitin-conjugating enzyme family.</text>
</comment>
<organism>
    <name type="scientific">Kluyveromyces lactis (strain ATCC 8585 / CBS 2359 / DSM 70799 / NBRC 1267 / NRRL Y-1140 / WM37)</name>
    <name type="common">Yeast</name>
    <name type="synonym">Candida sphaerica</name>
    <dbReference type="NCBI Taxonomy" id="284590"/>
    <lineage>
        <taxon>Eukaryota</taxon>
        <taxon>Fungi</taxon>
        <taxon>Dikarya</taxon>
        <taxon>Ascomycota</taxon>
        <taxon>Saccharomycotina</taxon>
        <taxon>Saccharomycetes</taxon>
        <taxon>Saccharomycetales</taxon>
        <taxon>Saccharomycetaceae</taxon>
        <taxon>Kluyveromyces</taxon>
    </lineage>
</organism>
<keyword id="KW-0002">3D-structure</keyword>
<keyword id="KW-0067">ATP-binding</keyword>
<keyword id="KW-0156">Chromatin regulator</keyword>
<keyword id="KW-0963">Cytoplasm</keyword>
<keyword id="KW-0227">DNA damage</keyword>
<keyword id="KW-0234">DNA repair</keyword>
<keyword id="KW-0547">Nucleotide-binding</keyword>
<keyword id="KW-0539">Nucleus</keyword>
<keyword id="KW-1185">Reference proteome</keyword>
<keyword id="KW-0749">Sporulation</keyword>
<keyword id="KW-0804">Transcription</keyword>
<keyword id="KW-0805">Transcription regulation</keyword>
<keyword id="KW-0808">Transferase</keyword>
<keyword id="KW-0833">Ubl conjugation pathway</keyword>
<reference key="1">
    <citation type="journal article" date="2004" name="Nature">
        <title>Genome evolution in yeasts.</title>
        <authorList>
            <person name="Dujon B."/>
            <person name="Sherman D."/>
            <person name="Fischer G."/>
            <person name="Durrens P."/>
            <person name="Casaregola S."/>
            <person name="Lafontaine I."/>
            <person name="de Montigny J."/>
            <person name="Marck C."/>
            <person name="Neuveglise C."/>
            <person name="Talla E."/>
            <person name="Goffard N."/>
            <person name="Frangeul L."/>
            <person name="Aigle M."/>
            <person name="Anthouard V."/>
            <person name="Babour A."/>
            <person name="Barbe V."/>
            <person name="Barnay S."/>
            <person name="Blanchin S."/>
            <person name="Beckerich J.-M."/>
            <person name="Beyne E."/>
            <person name="Bleykasten C."/>
            <person name="Boisrame A."/>
            <person name="Boyer J."/>
            <person name="Cattolico L."/>
            <person name="Confanioleri F."/>
            <person name="de Daruvar A."/>
            <person name="Despons L."/>
            <person name="Fabre E."/>
            <person name="Fairhead C."/>
            <person name="Ferry-Dumazet H."/>
            <person name="Groppi A."/>
            <person name="Hantraye F."/>
            <person name="Hennequin C."/>
            <person name="Jauniaux N."/>
            <person name="Joyet P."/>
            <person name="Kachouri R."/>
            <person name="Kerrest A."/>
            <person name="Koszul R."/>
            <person name="Lemaire M."/>
            <person name="Lesur I."/>
            <person name="Ma L."/>
            <person name="Muller H."/>
            <person name="Nicaud J.-M."/>
            <person name="Nikolski M."/>
            <person name="Oztas S."/>
            <person name="Ozier-Kalogeropoulos O."/>
            <person name="Pellenz S."/>
            <person name="Potier S."/>
            <person name="Richard G.-F."/>
            <person name="Straub M.-L."/>
            <person name="Suleau A."/>
            <person name="Swennen D."/>
            <person name="Tekaia F."/>
            <person name="Wesolowski-Louvel M."/>
            <person name="Westhof E."/>
            <person name="Wirth B."/>
            <person name="Zeniou-Meyer M."/>
            <person name="Zivanovic Y."/>
            <person name="Bolotin-Fukuhara M."/>
            <person name="Thierry A."/>
            <person name="Bouchier C."/>
            <person name="Caudron B."/>
            <person name="Scarpelli C."/>
            <person name="Gaillardin C."/>
            <person name="Weissenbach J."/>
            <person name="Wincker P."/>
            <person name="Souciet J.-L."/>
        </authorList>
    </citation>
    <scope>NUCLEOTIDE SEQUENCE [LARGE SCALE GENOMIC DNA]</scope>
    <source>
        <strain>ATCC 8585 / CBS 2359 / DSM 70799 / NBRC 1267 / NRRL Y-1140 / WM37</strain>
    </source>
</reference>
<gene>
    <name type="primary">UBC2</name>
    <name type="ordered locus">KLLA0C05632g</name>
</gene>
<name>UBC2_KLULA</name>
<dbReference type="EC" id="2.3.2.23"/>
<dbReference type="EMBL" id="CR382123">
    <property type="protein sequence ID" value="CAH01301.1"/>
    <property type="molecule type" value="Genomic_DNA"/>
</dbReference>
<dbReference type="RefSeq" id="XP_452450.1">
    <property type="nucleotide sequence ID" value="XM_452450.1"/>
</dbReference>
<dbReference type="PDB" id="7W75">
    <property type="method" value="X-ray"/>
    <property type="resolution" value="3.20 A"/>
    <property type="chains" value="A/B=1-164"/>
</dbReference>
<dbReference type="PDB" id="7W76">
    <property type="method" value="X-ray"/>
    <property type="resolution" value="3.05 A"/>
    <property type="chains" value="A/B=1-164"/>
</dbReference>
<dbReference type="PDBsum" id="7W75"/>
<dbReference type="PDBsum" id="7W76"/>
<dbReference type="SMR" id="Q6CUD9"/>
<dbReference type="FunCoup" id="Q6CUD9">
    <property type="interactions" value="857"/>
</dbReference>
<dbReference type="STRING" id="284590.Q6CUD9"/>
<dbReference type="PaxDb" id="284590-Q6CUD9"/>
<dbReference type="KEGG" id="kla:KLLA0_C05632g"/>
<dbReference type="eggNOG" id="KOG0419">
    <property type="taxonomic scope" value="Eukaryota"/>
</dbReference>
<dbReference type="HOGENOM" id="CLU_030988_10_2_1"/>
<dbReference type="InParanoid" id="Q6CUD9"/>
<dbReference type="OMA" id="DHKSQYI"/>
<dbReference type="UniPathway" id="UPA00143"/>
<dbReference type="Proteomes" id="UP000000598">
    <property type="component" value="Chromosome C"/>
</dbReference>
<dbReference type="GO" id="GO:0005737">
    <property type="term" value="C:cytoplasm"/>
    <property type="evidence" value="ECO:0007669"/>
    <property type="project" value="UniProtKB-SubCell"/>
</dbReference>
<dbReference type="GO" id="GO:0005634">
    <property type="term" value="C:nucleus"/>
    <property type="evidence" value="ECO:0007669"/>
    <property type="project" value="UniProtKB-SubCell"/>
</dbReference>
<dbReference type="GO" id="GO:0005524">
    <property type="term" value="F:ATP binding"/>
    <property type="evidence" value="ECO:0007669"/>
    <property type="project" value="UniProtKB-KW"/>
</dbReference>
<dbReference type="GO" id="GO:0061631">
    <property type="term" value="F:ubiquitin conjugating enzyme activity"/>
    <property type="evidence" value="ECO:0007669"/>
    <property type="project" value="UniProtKB-EC"/>
</dbReference>
<dbReference type="GO" id="GO:0006325">
    <property type="term" value="P:chromatin organization"/>
    <property type="evidence" value="ECO:0007669"/>
    <property type="project" value="UniProtKB-KW"/>
</dbReference>
<dbReference type="GO" id="GO:0006281">
    <property type="term" value="P:DNA repair"/>
    <property type="evidence" value="ECO:0007669"/>
    <property type="project" value="UniProtKB-KW"/>
</dbReference>
<dbReference type="GO" id="GO:0016567">
    <property type="term" value="P:protein ubiquitination"/>
    <property type="evidence" value="ECO:0007669"/>
    <property type="project" value="UniProtKB-UniPathway"/>
</dbReference>
<dbReference type="GO" id="GO:0030435">
    <property type="term" value="P:sporulation resulting in formation of a cellular spore"/>
    <property type="evidence" value="ECO:0007669"/>
    <property type="project" value="UniProtKB-KW"/>
</dbReference>
<dbReference type="CDD" id="cd23790">
    <property type="entry name" value="UBCc_UBE2A_2B"/>
    <property type="match status" value="1"/>
</dbReference>
<dbReference type="FunFam" id="3.10.110.10:FF:000007">
    <property type="entry name" value="Ubiquitin-conjugating enzyme E2 2"/>
    <property type="match status" value="1"/>
</dbReference>
<dbReference type="Gene3D" id="3.10.110.10">
    <property type="entry name" value="Ubiquitin Conjugating Enzyme"/>
    <property type="match status" value="1"/>
</dbReference>
<dbReference type="InterPro" id="IPR050113">
    <property type="entry name" value="Ub_conjugating_enzyme"/>
</dbReference>
<dbReference type="InterPro" id="IPR000608">
    <property type="entry name" value="UBQ-conjugat_E2_core"/>
</dbReference>
<dbReference type="InterPro" id="IPR023313">
    <property type="entry name" value="UBQ-conjugating_AS"/>
</dbReference>
<dbReference type="InterPro" id="IPR016135">
    <property type="entry name" value="UBQ-conjugating_enzyme/RWD"/>
</dbReference>
<dbReference type="PANTHER" id="PTHR24067">
    <property type="entry name" value="UBIQUITIN-CONJUGATING ENZYME E2"/>
    <property type="match status" value="1"/>
</dbReference>
<dbReference type="Pfam" id="PF00179">
    <property type="entry name" value="UQ_con"/>
    <property type="match status" value="1"/>
</dbReference>
<dbReference type="SMART" id="SM00212">
    <property type="entry name" value="UBCc"/>
    <property type="match status" value="1"/>
</dbReference>
<dbReference type="SUPFAM" id="SSF54495">
    <property type="entry name" value="UBC-like"/>
    <property type="match status" value="1"/>
</dbReference>
<dbReference type="PROSITE" id="PS00183">
    <property type="entry name" value="UBC_1"/>
    <property type="match status" value="1"/>
</dbReference>
<dbReference type="PROSITE" id="PS50127">
    <property type="entry name" value="UBC_2"/>
    <property type="match status" value="1"/>
</dbReference>
<accession>Q6CUD9</accession>
<protein>
    <recommendedName>
        <fullName>Ubiquitin-conjugating enzyme E2 2</fullName>
        <ecNumber>2.3.2.23</ecNumber>
    </recommendedName>
    <alternativeName>
        <fullName>E2 ubiquitin-conjugating enzyme 2</fullName>
    </alternativeName>
    <alternativeName>
        <fullName>Ubiquitin carrier protein UBC2</fullName>
    </alternativeName>
    <alternativeName>
        <fullName>Ubiquitin-protein ligase UBC2</fullName>
    </alternativeName>
</protein>